<comment type="function">
    <text evidence="1">Extracellular matrix protein that plays significant roles in the vascular system and is required for the maintenance and stability of blood vessel. Affects several essential steps in angiogenesis including endothelial cell proliferation, migration, and tube formation. Positively regulates angiogenesis by acting as a ligand for CD93 receptor.</text>
</comment>
<comment type="subunit">
    <text evidence="1">Heteromer of p110, p125, p140 and p200 subunits; disulfide-linked. Interacts with VEGFA. Interacts with CD93; this interaction promotes angiogenesis. Interacts with CD248.</text>
</comment>
<comment type="subcellular location">
    <subcellularLocation>
        <location evidence="1">Secreted</location>
        <location evidence="1">Extracellular space</location>
        <location evidence="1">Extracellular matrix</location>
    </subcellularLocation>
</comment>
<comment type="alternative products">
    <event type="alternative splicing"/>
    <isoform>
        <id>A6H6E2-1</id>
        <name evidence="6 7">1</name>
        <sequence type="displayed"/>
    </isoform>
    <isoform>
        <id>A6H6E2-2</id>
        <name evidence="6">2</name>
        <sequence type="described" ref="VSP_053050"/>
    </isoform>
</comment>
<comment type="PTM">
    <text evidence="1">N- and O-glycosylated.</text>
</comment>
<comment type="PTM">
    <text evidence="1">Processed by matrix metalloproteinases (MMPs) including MMP9 and, to a lesser degree, by MMP2 upon angiogenic stimulation.</text>
</comment>
<comment type="PTM">
    <text evidence="1">O-fucosylated within the EMI domain (at Ser-63 and Thr-67) by FUT10/POFUT3 and FUT11/POFUT4.</text>
</comment>
<comment type="disruption phenotype">
    <text evidence="8">Mmrn2 deletion mice develop normally and display no gross abnormalities, likely due to compensatory mechanisms similar to what observed with other key regulators of angiogenesis, such as thrombospondin-1. However, they display endothelial cell junctional defects associated with increased levels of phosphorylated VEGFR2.</text>
</comment>
<comment type="sequence caution" evidence="10">
    <conflict type="frameshift">
        <sequence resource="EMBL-CDS" id="BAC37291"/>
    </conflict>
</comment>
<name>MMRN2_MOUSE</name>
<organism>
    <name type="scientific">Mus musculus</name>
    <name type="common">Mouse</name>
    <dbReference type="NCBI Taxonomy" id="10090"/>
    <lineage>
        <taxon>Eukaryota</taxon>
        <taxon>Metazoa</taxon>
        <taxon>Chordata</taxon>
        <taxon>Craniata</taxon>
        <taxon>Vertebrata</taxon>
        <taxon>Euteleostomi</taxon>
        <taxon>Mammalia</taxon>
        <taxon>Eutheria</taxon>
        <taxon>Euarchontoglires</taxon>
        <taxon>Glires</taxon>
        <taxon>Rodentia</taxon>
        <taxon>Myomorpha</taxon>
        <taxon>Muroidea</taxon>
        <taxon>Muridae</taxon>
        <taxon>Murinae</taxon>
        <taxon>Mus</taxon>
        <taxon>Mus</taxon>
    </lineage>
</organism>
<evidence type="ECO:0000250" key="1">
    <source>
        <dbReference type="UniProtKB" id="Q9H8L6"/>
    </source>
</evidence>
<evidence type="ECO:0000255" key="2"/>
<evidence type="ECO:0000255" key="3">
    <source>
        <dbReference type="PROSITE-ProRule" id="PRU00368"/>
    </source>
</evidence>
<evidence type="ECO:0000255" key="4">
    <source>
        <dbReference type="PROSITE-ProRule" id="PRU00384"/>
    </source>
</evidence>
<evidence type="ECO:0000256" key="5">
    <source>
        <dbReference type="SAM" id="MobiDB-lite"/>
    </source>
</evidence>
<evidence type="ECO:0000269" key="6">
    <source>
    </source>
</evidence>
<evidence type="ECO:0000269" key="7">
    <source>
    </source>
</evidence>
<evidence type="ECO:0000269" key="8">
    <source>
    </source>
</evidence>
<evidence type="ECO:0000303" key="9">
    <source>
    </source>
</evidence>
<evidence type="ECO:0000305" key="10"/>
<evidence type="ECO:0000312" key="11">
    <source>
        <dbReference type="EMBL" id="AAH34871.1"/>
    </source>
</evidence>
<evidence type="ECO:0000312" key="12">
    <source>
        <dbReference type="EMBL" id="AAI45846.1"/>
    </source>
</evidence>
<evidence type="ECO:0000312" key="13">
    <source>
        <dbReference type="EMBL" id="BAC37291.1"/>
    </source>
</evidence>
<evidence type="ECO:0000312" key="14">
    <source>
        <dbReference type="EMBL" id="EDL24879.1"/>
    </source>
</evidence>
<evidence type="ECO:0000312" key="15">
    <source>
        <dbReference type="MGI" id="MGI:2385618"/>
    </source>
</evidence>
<reference evidence="10 13" key="1">
    <citation type="journal article" date="2005" name="Science">
        <title>The transcriptional landscape of the mammalian genome.</title>
        <authorList>
            <person name="Carninci P."/>
            <person name="Kasukawa T."/>
            <person name="Katayama S."/>
            <person name="Gough J."/>
            <person name="Frith M.C."/>
            <person name="Maeda N."/>
            <person name="Oyama R."/>
            <person name="Ravasi T."/>
            <person name="Lenhard B."/>
            <person name="Wells C."/>
            <person name="Kodzius R."/>
            <person name="Shimokawa K."/>
            <person name="Bajic V.B."/>
            <person name="Brenner S.E."/>
            <person name="Batalov S."/>
            <person name="Forrest A.R."/>
            <person name="Zavolan M."/>
            <person name="Davis M.J."/>
            <person name="Wilming L.G."/>
            <person name="Aidinis V."/>
            <person name="Allen J.E."/>
            <person name="Ambesi-Impiombato A."/>
            <person name="Apweiler R."/>
            <person name="Aturaliya R.N."/>
            <person name="Bailey T.L."/>
            <person name="Bansal M."/>
            <person name="Baxter L."/>
            <person name="Beisel K.W."/>
            <person name="Bersano T."/>
            <person name="Bono H."/>
            <person name="Chalk A.M."/>
            <person name="Chiu K.P."/>
            <person name="Choudhary V."/>
            <person name="Christoffels A."/>
            <person name="Clutterbuck D.R."/>
            <person name="Crowe M.L."/>
            <person name="Dalla E."/>
            <person name="Dalrymple B.P."/>
            <person name="de Bono B."/>
            <person name="Della Gatta G."/>
            <person name="di Bernardo D."/>
            <person name="Down T."/>
            <person name="Engstrom P."/>
            <person name="Fagiolini M."/>
            <person name="Faulkner G."/>
            <person name="Fletcher C.F."/>
            <person name="Fukushima T."/>
            <person name="Furuno M."/>
            <person name="Futaki S."/>
            <person name="Gariboldi M."/>
            <person name="Georgii-Hemming P."/>
            <person name="Gingeras T.R."/>
            <person name="Gojobori T."/>
            <person name="Green R.E."/>
            <person name="Gustincich S."/>
            <person name="Harbers M."/>
            <person name="Hayashi Y."/>
            <person name="Hensch T.K."/>
            <person name="Hirokawa N."/>
            <person name="Hill D."/>
            <person name="Huminiecki L."/>
            <person name="Iacono M."/>
            <person name="Ikeo K."/>
            <person name="Iwama A."/>
            <person name="Ishikawa T."/>
            <person name="Jakt M."/>
            <person name="Kanapin A."/>
            <person name="Katoh M."/>
            <person name="Kawasawa Y."/>
            <person name="Kelso J."/>
            <person name="Kitamura H."/>
            <person name="Kitano H."/>
            <person name="Kollias G."/>
            <person name="Krishnan S.P."/>
            <person name="Kruger A."/>
            <person name="Kummerfeld S.K."/>
            <person name="Kurochkin I.V."/>
            <person name="Lareau L.F."/>
            <person name="Lazarevic D."/>
            <person name="Lipovich L."/>
            <person name="Liu J."/>
            <person name="Liuni S."/>
            <person name="McWilliam S."/>
            <person name="Madan Babu M."/>
            <person name="Madera M."/>
            <person name="Marchionni L."/>
            <person name="Matsuda H."/>
            <person name="Matsuzawa S."/>
            <person name="Miki H."/>
            <person name="Mignone F."/>
            <person name="Miyake S."/>
            <person name="Morris K."/>
            <person name="Mottagui-Tabar S."/>
            <person name="Mulder N."/>
            <person name="Nakano N."/>
            <person name="Nakauchi H."/>
            <person name="Ng P."/>
            <person name="Nilsson R."/>
            <person name="Nishiguchi S."/>
            <person name="Nishikawa S."/>
            <person name="Nori F."/>
            <person name="Ohara O."/>
            <person name="Okazaki Y."/>
            <person name="Orlando V."/>
            <person name="Pang K.C."/>
            <person name="Pavan W.J."/>
            <person name="Pavesi G."/>
            <person name="Pesole G."/>
            <person name="Petrovsky N."/>
            <person name="Piazza S."/>
            <person name="Reed J."/>
            <person name="Reid J.F."/>
            <person name="Ring B.Z."/>
            <person name="Ringwald M."/>
            <person name="Rost B."/>
            <person name="Ruan Y."/>
            <person name="Salzberg S.L."/>
            <person name="Sandelin A."/>
            <person name="Schneider C."/>
            <person name="Schoenbach C."/>
            <person name="Sekiguchi K."/>
            <person name="Semple C.A."/>
            <person name="Seno S."/>
            <person name="Sessa L."/>
            <person name="Sheng Y."/>
            <person name="Shibata Y."/>
            <person name="Shimada H."/>
            <person name="Shimada K."/>
            <person name="Silva D."/>
            <person name="Sinclair B."/>
            <person name="Sperling S."/>
            <person name="Stupka E."/>
            <person name="Sugiura K."/>
            <person name="Sultana R."/>
            <person name="Takenaka Y."/>
            <person name="Taki K."/>
            <person name="Tammoja K."/>
            <person name="Tan S.L."/>
            <person name="Tang S."/>
            <person name="Taylor M.S."/>
            <person name="Tegner J."/>
            <person name="Teichmann S.A."/>
            <person name="Ueda H.R."/>
            <person name="van Nimwegen E."/>
            <person name="Verardo R."/>
            <person name="Wei C.L."/>
            <person name="Yagi K."/>
            <person name="Yamanishi H."/>
            <person name="Zabarovsky E."/>
            <person name="Zhu S."/>
            <person name="Zimmer A."/>
            <person name="Hide W."/>
            <person name="Bult C."/>
            <person name="Grimmond S.M."/>
            <person name="Teasdale R.D."/>
            <person name="Liu E.T."/>
            <person name="Brusic V."/>
            <person name="Quackenbush J."/>
            <person name="Wahlestedt C."/>
            <person name="Mattick J.S."/>
            <person name="Hume D.A."/>
            <person name="Kai C."/>
            <person name="Sasaki D."/>
            <person name="Tomaru Y."/>
            <person name="Fukuda S."/>
            <person name="Kanamori-Katayama M."/>
            <person name="Suzuki M."/>
            <person name="Aoki J."/>
            <person name="Arakawa T."/>
            <person name="Iida J."/>
            <person name="Imamura K."/>
            <person name="Itoh M."/>
            <person name="Kato T."/>
            <person name="Kawaji H."/>
            <person name="Kawagashira N."/>
            <person name="Kawashima T."/>
            <person name="Kojima M."/>
            <person name="Kondo S."/>
            <person name="Konno H."/>
            <person name="Nakano K."/>
            <person name="Ninomiya N."/>
            <person name="Nishio T."/>
            <person name="Okada M."/>
            <person name="Plessy C."/>
            <person name="Shibata K."/>
            <person name="Shiraki T."/>
            <person name="Suzuki S."/>
            <person name="Tagami M."/>
            <person name="Waki K."/>
            <person name="Watahiki A."/>
            <person name="Okamura-Oho Y."/>
            <person name="Suzuki H."/>
            <person name="Kawai J."/>
            <person name="Hayashizaki Y."/>
        </authorList>
    </citation>
    <scope>NUCLEOTIDE SEQUENCE [LARGE SCALE MRNA] (ISOFORM 1)</scope>
    <source>
        <strain evidence="13">C57BL/6J</strain>
        <tissue evidence="13">Muellerian duct</tissue>
    </source>
</reference>
<reference evidence="14" key="2">
    <citation type="submission" date="2005-07" db="EMBL/GenBank/DDBJ databases">
        <authorList>
            <person name="Mural R.J."/>
            <person name="Adams M.D."/>
            <person name="Myers E.W."/>
            <person name="Smith H.O."/>
            <person name="Venter J.C."/>
        </authorList>
    </citation>
    <scope>NUCLEOTIDE SEQUENCE [LARGE SCALE GENOMIC DNA]</scope>
</reference>
<reference evidence="10 12" key="3">
    <citation type="journal article" date="2004" name="Genome Res.">
        <title>The status, quality, and expansion of the NIH full-length cDNA project: the Mammalian Gene Collection (MGC).</title>
        <authorList>
            <consortium name="The MGC Project Team"/>
        </authorList>
    </citation>
    <scope>NUCLEOTIDE SEQUENCE [LARGE SCALE MRNA] (ISOFORMS 1 AND 2)</scope>
    <source>
        <strain evidence="11">C57BL/6J</strain>
        <tissue evidence="11">Mammary gland</tissue>
        <tissue evidence="12">Thymus</tissue>
    </source>
</reference>
<reference key="4">
    <citation type="journal article" date="2010" name="Cell">
        <title>A tissue-specific atlas of mouse protein phosphorylation and expression.</title>
        <authorList>
            <person name="Huttlin E.L."/>
            <person name="Jedrychowski M.P."/>
            <person name="Elias J.E."/>
            <person name="Goswami T."/>
            <person name="Rad R."/>
            <person name="Beausoleil S.A."/>
            <person name="Villen J."/>
            <person name="Haas W."/>
            <person name="Sowa M.E."/>
            <person name="Gygi S.P."/>
        </authorList>
    </citation>
    <scope>IDENTIFICATION BY MASS SPECTROMETRY [LARGE SCALE ANALYSIS]</scope>
    <source>
        <tissue>Brain</tissue>
        <tissue>Brown adipose tissue</tissue>
        <tissue>Heart</tissue>
        <tissue>Kidney</tissue>
        <tissue>Lung</tissue>
    </source>
</reference>
<reference key="5">
    <citation type="journal article" date="2020" name="Matrix Biol.">
        <title>Multimerin-2 maintains vascular stability and permeability.</title>
        <authorList>
            <person name="Pellicani R."/>
            <person name="Poletto E."/>
            <person name="Andreuzzi E."/>
            <person name="Paulitti A."/>
            <person name="Doliana R."/>
            <person name="Bizzotto D."/>
            <person name="Braghetta P."/>
            <person name="Colladel R."/>
            <person name="Tarticchio G."/>
            <person name="Sabatelli P."/>
            <person name="Bucciotti F."/>
            <person name="Bressan G."/>
            <person name="Iozzo R.V."/>
            <person name="Colombatti A."/>
            <person name="Bonaldo P."/>
            <person name="Mongiat M."/>
        </authorList>
    </citation>
    <scope>FUNCTION</scope>
    <scope>DISRUPTION PHENOTYPE</scope>
</reference>
<dbReference type="EMBL" id="AK078470">
    <property type="protein sequence ID" value="BAC37291.1"/>
    <property type="status" value="ALT_FRAME"/>
    <property type="molecule type" value="mRNA"/>
</dbReference>
<dbReference type="EMBL" id="CH466573">
    <property type="protein sequence ID" value="EDL24879.1"/>
    <property type="molecule type" value="Genomic_DNA"/>
</dbReference>
<dbReference type="EMBL" id="BC034871">
    <property type="protein sequence ID" value="AAH34871.1"/>
    <property type="molecule type" value="mRNA"/>
</dbReference>
<dbReference type="EMBL" id="BC145845">
    <property type="protein sequence ID" value="AAI45846.1"/>
    <property type="molecule type" value="mRNA"/>
</dbReference>
<dbReference type="CCDS" id="CCDS36876.1">
    <molecule id="A6H6E2-1"/>
</dbReference>
<dbReference type="RefSeq" id="NP_694767.3">
    <molecule id="A6H6E2-1"/>
    <property type="nucleotide sequence ID" value="NM_153127.3"/>
</dbReference>
<dbReference type="SMR" id="A6H6E2"/>
<dbReference type="BioGRID" id="222862">
    <property type="interactions" value="5"/>
</dbReference>
<dbReference type="ComplexPortal" id="CPX-451">
    <property type="entry name" value="Multimerin-2 complex"/>
</dbReference>
<dbReference type="FunCoup" id="A6H6E2">
    <property type="interactions" value="236"/>
</dbReference>
<dbReference type="STRING" id="10090.ENSMUSP00000107539"/>
<dbReference type="GlyConnect" id="2515">
    <property type="glycosylation" value="1 N-Linked glycan (1 site)"/>
</dbReference>
<dbReference type="GlyCosmos" id="A6H6E2">
    <property type="glycosylation" value="12 sites, 1 glycan"/>
</dbReference>
<dbReference type="GlyGen" id="A6H6E2">
    <property type="glycosylation" value="13 sites, 4 N-linked glycans (6 sites), 1 O-linked glycan (1 site)"/>
</dbReference>
<dbReference type="iPTMnet" id="A6H6E2"/>
<dbReference type="PhosphoSitePlus" id="A6H6E2"/>
<dbReference type="CPTAC" id="non-CPTAC-3482"/>
<dbReference type="PaxDb" id="10090-ENSMUSP00000107539"/>
<dbReference type="PeptideAtlas" id="A6H6E2"/>
<dbReference type="ProteomicsDB" id="290266">
    <molecule id="A6H6E2-1"/>
</dbReference>
<dbReference type="ProteomicsDB" id="290267">
    <molecule id="A6H6E2-2"/>
</dbReference>
<dbReference type="Antibodypedia" id="16004">
    <property type="antibodies" value="93 antibodies from 24 providers"/>
</dbReference>
<dbReference type="Ensembl" id="ENSMUST00000111908.3">
    <molecule id="A6H6E2-1"/>
    <property type="protein sequence ID" value="ENSMUSP00000107539.2"/>
    <property type="gene ID" value="ENSMUSG00000041445.10"/>
</dbReference>
<dbReference type="GeneID" id="105450"/>
<dbReference type="KEGG" id="mmu:105450"/>
<dbReference type="UCSC" id="uc007tav.1">
    <molecule id="A6H6E2-1"/>
    <property type="organism name" value="mouse"/>
</dbReference>
<dbReference type="AGR" id="MGI:2385618"/>
<dbReference type="CTD" id="79812"/>
<dbReference type="MGI" id="MGI:2385618">
    <property type="gene designation" value="Mmrn2"/>
</dbReference>
<dbReference type="VEuPathDB" id="HostDB:ENSMUSG00000041445"/>
<dbReference type="eggNOG" id="ENOG502QUTH">
    <property type="taxonomic scope" value="Eukaryota"/>
</dbReference>
<dbReference type="GeneTree" id="ENSGT01030000234633"/>
<dbReference type="HOGENOM" id="CLU_012255_1_0_1"/>
<dbReference type="InParanoid" id="A6H6E2"/>
<dbReference type="OMA" id="EFSNHMS"/>
<dbReference type="OrthoDB" id="8963519at2759"/>
<dbReference type="PhylomeDB" id="A6H6E2"/>
<dbReference type="TreeFam" id="TF336041"/>
<dbReference type="BioGRID-ORCS" id="105450">
    <property type="hits" value="4 hits in 77 CRISPR screens"/>
</dbReference>
<dbReference type="ChiTaRS" id="Mmrn2">
    <property type="organism name" value="mouse"/>
</dbReference>
<dbReference type="PRO" id="PR:A6H6E2"/>
<dbReference type="Proteomes" id="UP000000589">
    <property type="component" value="Chromosome 14"/>
</dbReference>
<dbReference type="RNAct" id="A6H6E2">
    <property type="molecule type" value="protein"/>
</dbReference>
<dbReference type="Bgee" id="ENSMUSG00000041445">
    <property type="expression patterns" value="Expressed in brain blood vessel and 218 other cell types or tissues"/>
</dbReference>
<dbReference type="ExpressionAtlas" id="A6H6E2">
    <property type="expression patterns" value="baseline and differential"/>
</dbReference>
<dbReference type="GO" id="GO:0005604">
    <property type="term" value="C:basement membrane"/>
    <property type="evidence" value="ECO:0000314"/>
    <property type="project" value="MGI"/>
</dbReference>
<dbReference type="GO" id="GO:0062023">
    <property type="term" value="C:collagen-containing extracellular matrix"/>
    <property type="evidence" value="ECO:0007005"/>
    <property type="project" value="BHF-UCL"/>
</dbReference>
<dbReference type="GO" id="GO:0031012">
    <property type="term" value="C:extracellular matrix"/>
    <property type="evidence" value="ECO:0000304"/>
    <property type="project" value="MGI"/>
</dbReference>
<dbReference type="GO" id="GO:0005615">
    <property type="term" value="C:extracellular space"/>
    <property type="evidence" value="ECO:0000250"/>
    <property type="project" value="UniProtKB"/>
</dbReference>
<dbReference type="GO" id="GO:1990972">
    <property type="term" value="C:multimerin complex"/>
    <property type="evidence" value="ECO:0000250"/>
    <property type="project" value="ComplexPortal"/>
</dbReference>
<dbReference type="GO" id="GO:0048018">
    <property type="term" value="F:receptor ligand activity"/>
    <property type="evidence" value="ECO:0007669"/>
    <property type="project" value="Ensembl"/>
</dbReference>
<dbReference type="GO" id="GO:0007155">
    <property type="term" value="P:cell adhesion"/>
    <property type="evidence" value="ECO:0000303"/>
    <property type="project" value="ComplexPortal"/>
</dbReference>
<dbReference type="GO" id="GO:0002042">
    <property type="term" value="P:cell migration involved in sprouting angiogenesis"/>
    <property type="evidence" value="ECO:0000315"/>
    <property type="project" value="MGI"/>
</dbReference>
<dbReference type="GO" id="GO:1903588">
    <property type="term" value="P:negative regulation of blood vessel endothelial cell proliferation involved in sprouting angiogenesis"/>
    <property type="evidence" value="ECO:0000314"/>
    <property type="project" value="ComplexPortal"/>
</dbReference>
<dbReference type="GO" id="GO:0030336">
    <property type="term" value="P:negative regulation of cell migration"/>
    <property type="evidence" value="ECO:0000266"/>
    <property type="project" value="ComplexPortal"/>
</dbReference>
<dbReference type="GO" id="GO:0090051">
    <property type="term" value="P:negative regulation of cell migration involved in sprouting angiogenesis"/>
    <property type="evidence" value="ECO:0007669"/>
    <property type="project" value="Ensembl"/>
</dbReference>
<dbReference type="GO" id="GO:0008285">
    <property type="term" value="P:negative regulation of cell population proliferation"/>
    <property type="evidence" value="ECO:0000314"/>
    <property type="project" value="ComplexPortal"/>
</dbReference>
<dbReference type="GO" id="GO:0030948">
    <property type="term" value="P:negative regulation of vascular endothelial growth factor receptor signaling pathway"/>
    <property type="evidence" value="ECO:0007669"/>
    <property type="project" value="Ensembl"/>
</dbReference>
<dbReference type="GO" id="GO:1900426">
    <property type="term" value="P:positive regulation of defense response to bacterium"/>
    <property type="evidence" value="ECO:0000314"/>
    <property type="project" value="ComplexPortal"/>
</dbReference>
<dbReference type="GO" id="GO:1905278">
    <property type="term" value="P:positive regulation of epithelial tube formation"/>
    <property type="evidence" value="ECO:0000266"/>
    <property type="project" value="ComplexPortal"/>
</dbReference>
<dbReference type="GO" id="GO:1905332">
    <property type="term" value="P:positive regulation of morphogenesis of an epithelium"/>
    <property type="evidence" value="ECO:0000266"/>
    <property type="project" value="ComplexPortal"/>
</dbReference>
<dbReference type="FunFam" id="2.60.120.40:FF:000028">
    <property type="entry name" value="Multimerin 2"/>
    <property type="match status" value="1"/>
</dbReference>
<dbReference type="Gene3D" id="2.60.120.40">
    <property type="match status" value="1"/>
</dbReference>
<dbReference type="InterPro" id="IPR001073">
    <property type="entry name" value="C1q_dom"/>
</dbReference>
<dbReference type="InterPro" id="IPR050392">
    <property type="entry name" value="Collagen/C1q_domain"/>
</dbReference>
<dbReference type="InterPro" id="IPR011489">
    <property type="entry name" value="EMI_domain"/>
</dbReference>
<dbReference type="InterPro" id="IPR008983">
    <property type="entry name" value="Tumour_necrosis_fac-like_dom"/>
</dbReference>
<dbReference type="PANTHER" id="PTHR15427">
    <property type="entry name" value="EMILIN ELASTIN MICROFIBRIL INTERFACE-LOCATED PROTEIN ELASTIN MICROFIBRIL INTERFACER"/>
    <property type="match status" value="1"/>
</dbReference>
<dbReference type="PANTHER" id="PTHR15427:SF6">
    <property type="entry name" value="MULTIMERIN-2"/>
    <property type="match status" value="1"/>
</dbReference>
<dbReference type="Pfam" id="PF00386">
    <property type="entry name" value="C1q"/>
    <property type="match status" value="1"/>
</dbReference>
<dbReference type="Pfam" id="PF07546">
    <property type="entry name" value="EMI"/>
    <property type="match status" value="1"/>
</dbReference>
<dbReference type="SMART" id="SM00110">
    <property type="entry name" value="C1Q"/>
    <property type="match status" value="1"/>
</dbReference>
<dbReference type="SUPFAM" id="SSF49842">
    <property type="entry name" value="TNF-like"/>
    <property type="match status" value="1"/>
</dbReference>
<dbReference type="PROSITE" id="PS50871">
    <property type="entry name" value="C1Q"/>
    <property type="match status" value="1"/>
</dbReference>
<dbReference type="PROSITE" id="PS51041">
    <property type="entry name" value="EMI"/>
    <property type="match status" value="1"/>
</dbReference>
<gene>
    <name evidence="12 15" type="primary">Mmrn2</name>
</gene>
<sequence length="943" mass="105206">MIPTLLLGFGVYLSWGLLGSWAQDPGTKFSHLNRPGMPEGWRLGAEDTSRDPIRRNWCPYQKSRLVTFVAACKTEKFLVHSQQPCPQGAPDCQGVRVMYRVAQKPVYQVQQKVLISVDWRCCPGFQGPDCQDHNPTANPEPTEPSGKLQETWDSMDGFELGHPVPEFNEIKVPQEQQENLLQNLQNDAQSVEDGFPGSWEAPPSNLTDEMTEANLTEFEFPGRTSEHLLQPHIDAFLKAHFSPIWKNFNDSLHSLSQAIRNLSLDVEANHQAIKMIQEGTVARADFQELGAKFEAKVQQNSQRLGQLWQDVEDQLHAQRRSVHHALSDVQAEVSTKLKQLVKAQELPGANGSLVMASAAAAARPEPESLQARLGQLQRNLSALHMVTSQREEELQSTLKNMDSVLKQHAEEIKELYSESDETFDQISKVERQVEELLVNHTGLRELRVILMEKSLIMEENKEEIERQLLELNLTLQHLHAGHADLIKYVKDCNCQRVNSDVDVAPEGHRDVMHTLEETQVSLDEQHQLDGSSLQALQSTVDAMSSAMDAYRGEGERARAERARIRSQLRALDHAVEALKTAANGTRKEIRLLHGSFTALLEDALRHQAVLAALFGEEMIDEMSEEAPRPLPLDYEQIRLALQDAASGLQEQAIGWEDLATRVEALEKAAGGFVEQHPQLAEGLEPSHDSGREEEAMTLAELEQEIRRLSSDVKQIGQCCEASWAASLNSSLEDLHSMLLDTQHGLRQHRQLFHNLFQNFQGLVASNISLDLGKLQAMLSKKDKKQPRGPGESRKRDKKQVVMSTDAHAKGLELWETGSPVAFYAGSSEGATALQMVKFNTTSINVGSSYFPEHGYFRAPKRGVYLFAVSITFGPGPGMGQLVFEGHHRVPVYSTEQRGGSTATTFAMVELQKGERAWFELIQGSATKGSQPGTAFGGFLMFKT</sequence>
<proteinExistence type="evidence at protein level"/>
<accession>A6H6E2</accession>
<accession>Q8BJX4</accession>
<accession>Q8K1Z7</accession>
<feature type="signal peptide" evidence="2">
    <location>
        <begin position="1"/>
        <end position="22"/>
    </location>
</feature>
<feature type="chain" id="PRO_0000367040" description="Multimerin-2" evidence="2">
    <location>
        <begin position="23"/>
        <end position="943"/>
    </location>
</feature>
<feature type="domain" description="EMI" evidence="4">
    <location>
        <begin position="54"/>
        <end position="132"/>
    </location>
</feature>
<feature type="domain" description="C1q" evidence="3">
    <location>
        <begin position="815"/>
        <end position="943"/>
    </location>
</feature>
<feature type="region of interest" description="Disordered" evidence="5">
    <location>
        <begin position="128"/>
        <end position="150"/>
    </location>
</feature>
<feature type="region of interest" description="Disordered" evidence="5">
    <location>
        <begin position="778"/>
        <end position="801"/>
    </location>
</feature>
<feature type="coiled-coil region" evidence="2">
    <location>
        <begin position="391"/>
        <end position="480"/>
    </location>
</feature>
<feature type="coiled-coil region" evidence="2">
    <location>
        <begin position="551"/>
        <end position="580"/>
    </location>
</feature>
<feature type="coiled-coil region" evidence="2">
    <location>
        <begin position="688"/>
        <end position="720"/>
    </location>
</feature>
<feature type="glycosylation site" description="O-linked (Fuc...) serine" evidence="1">
    <location>
        <position position="63"/>
    </location>
</feature>
<feature type="glycosylation site" description="O-linked (Fuc) threonine" evidence="1">
    <location>
        <position position="67"/>
    </location>
</feature>
<feature type="glycosylation site" description="N-linked (GlcNAc...) asparagine" evidence="2">
    <location>
        <position position="205"/>
    </location>
</feature>
<feature type="glycosylation site" description="N-linked (GlcNAc...) asparagine" evidence="2">
    <location>
        <position position="214"/>
    </location>
</feature>
<feature type="glycosylation site" description="N-linked (GlcNAc...) asparagine" evidence="2">
    <location>
        <position position="249"/>
    </location>
</feature>
<feature type="glycosylation site" description="N-linked (GlcNAc...) asparagine" evidence="2">
    <location>
        <position position="261"/>
    </location>
</feature>
<feature type="glycosylation site" description="N-linked (GlcNAc...) asparagine" evidence="2">
    <location>
        <position position="350"/>
    </location>
</feature>
<feature type="glycosylation site" description="N-linked (GlcNAc...) asparagine" evidence="2">
    <location>
        <position position="379"/>
    </location>
</feature>
<feature type="glycosylation site" description="N-linked (GlcNAc...) asparagine" evidence="2">
    <location>
        <position position="439"/>
    </location>
</feature>
<feature type="glycosylation site" description="N-linked (GlcNAc...) asparagine" evidence="2">
    <location>
        <position position="472"/>
    </location>
</feature>
<feature type="glycosylation site" description="N-linked (GlcNAc...) asparagine" evidence="2">
    <location>
        <position position="583"/>
    </location>
</feature>
<feature type="glycosylation site" description="N-linked (GlcNAc...) asparagine" evidence="2">
    <location>
        <position position="728"/>
    </location>
</feature>
<feature type="glycosylation site" description="N-linked (GlcNAc...) asparagine" evidence="2">
    <location>
        <position position="766"/>
    </location>
</feature>
<feature type="glycosylation site" description="N-linked (GlcNAc...) asparagine" evidence="2">
    <location>
        <position position="839"/>
    </location>
</feature>
<feature type="disulfide bond" evidence="4">
    <location>
        <begin position="58"/>
        <end position="122"/>
    </location>
</feature>
<feature type="disulfide bond" evidence="4">
    <location>
        <begin position="85"/>
        <end position="92"/>
    </location>
</feature>
<feature type="disulfide bond" evidence="4">
    <location>
        <begin position="121"/>
        <end position="130"/>
    </location>
</feature>
<feature type="splice variant" id="VSP_053050" description="In isoform 2." evidence="9">
    <location>
        <begin position="177"/>
        <end position="702"/>
    </location>
</feature>
<feature type="sequence conflict" description="In Ref. 1; BAC37291." evidence="10" ref="1">
    <original>S</original>
    <variation>G</variation>
    <location>
        <position position="352"/>
    </location>
</feature>
<protein>
    <recommendedName>
        <fullName evidence="12">Multimerin-2</fullName>
    </recommendedName>
</protein>
<keyword id="KW-0025">Alternative splicing</keyword>
<keyword id="KW-0037">Angiogenesis</keyword>
<keyword id="KW-0175">Coiled coil</keyword>
<keyword id="KW-1015">Disulfide bond</keyword>
<keyword id="KW-0272">Extracellular matrix</keyword>
<keyword id="KW-0325">Glycoprotein</keyword>
<keyword id="KW-1185">Reference proteome</keyword>
<keyword id="KW-0964">Secreted</keyword>
<keyword id="KW-0732">Signal</keyword>